<proteinExistence type="inferred from homology"/>
<protein>
    <recommendedName>
        <fullName>Interferon alpha-1/2</fullName>
        <shortName>IFN-alpha-1/2</shortName>
    </recommendedName>
</protein>
<sequence>MALPCSFSVALVLLSCHSLCCLACHLPDTHGLRNWRVLTLLGQMRRLSAGSCDHYTNDFAFPKELFDGQRLQEAQALSVVHVMTQKVFHLFCPDTSSAPWNMTLLEELCSGLSEQLDDLEACPLQEAGLAETPLMHEDSTLRTYFQRISLYLQDRNHSPCAWEMVRAEIGRSFFSSTILQERIRRRK</sequence>
<comment type="function">
    <text>Produced by macrophages, IFN-alpha have antiviral activities. Interferon stimulates the production of two enzymes: a protein kinase and an oligoadenylate synthetase.</text>
</comment>
<comment type="subcellular location">
    <subcellularLocation>
        <location>Secreted</location>
    </subcellularLocation>
</comment>
<comment type="similarity">
    <text evidence="3">Belongs to the alpha/beta interferon family.</text>
</comment>
<reference key="1">
    <citation type="journal article" date="1987" name="J. Interferon Res.">
        <title>Structure and expression in Escherichia coli of canine interferon-alpha genes.</title>
        <authorList>
            <person name="Himmler A."/>
            <person name="Hauptmann R."/>
            <person name="Adolf G.R."/>
            <person name="Swetly P."/>
        </authorList>
    </citation>
    <scope>NUCLEOTIDE SEQUENCE [GENOMIC DNA]</scope>
    <source>
        <tissue>Liver</tissue>
    </source>
</reference>
<dbReference type="EMBL" id="M28625">
    <property type="protein sequence ID" value="AAA30851.1"/>
    <property type="molecule type" value="Genomic_DNA"/>
</dbReference>
<dbReference type="EMBL" id="M28624">
    <property type="protein sequence ID" value="AAA30850.1"/>
    <property type="molecule type" value="Genomic_DNA"/>
</dbReference>
<dbReference type="PIR" id="I46204">
    <property type="entry name" value="I46204"/>
</dbReference>
<dbReference type="RefSeq" id="XP_003431605.1">
    <property type="nucleotide sequence ID" value="XM_003431557.4"/>
</dbReference>
<dbReference type="RefSeq" id="XP_003431691.1">
    <property type="nucleotide sequence ID" value="XM_003431643.2"/>
</dbReference>
<dbReference type="RefSeq" id="XP_003431692.3">
    <property type="nucleotide sequence ID" value="XM_003431644.4"/>
</dbReference>
<dbReference type="RefSeq" id="XP_003431693.3">
    <property type="nucleotide sequence ID" value="XM_003431645.4"/>
</dbReference>
<dbReference type="RefSeq" id="XP_038407548.1">
    <property type="nucleotide sequence ID" value="XM_038551620.1"/>
</dbReference>
<dbReference type="RefSeq" id="XP_038407550.1">
    <property type="nucleotide sequence ID" value="XM_038551622.1"/>
</dbReference>
<dbReference type="RefSeq" id="XP_038408443.1">
    <property type="nucleotide sequence ID" value="XM_038552515.1"/>
</dbReference>
<dbReference type="RefSeq" id="XP_038408444.1">
    <property type="nucleotide sequence ID" value="XM_038552516.1"/>
</dbReference>
<dbReference type="RefSeq" id="XP_038408445.1">
    <property type="nucleotide sequence ID" value="XM_038552517.1"/>
</dbReference>
<dbReference type="RefSeq" id="XP_038408446.1">
    <property type="nucleotide sequence ID" value="XM_038552518.1"/>
</dbReference>
<dbReference type="RefSeq" id="XP_038408447.1">
    <property type="nucleotide sequence ID" value="XM_038552519.1"/>
</dbReference>
<dbReference type="RefSeq" id="XP_038408448.1">
    <property type="nucleotide sequence ID" value="XM_038552520.1"/>
</dbReference>
<dbReference type="RefSeq" id="XP_038408449.1">
    <property type="nucleotide sequence ID" value="XM_038552521.1"/>
</dbReference>
<dbReference type="RefSeq" id="XP_038408451.1">
    <property type="nucleotide sequence ID" value="XM_038552523.1"/>
</dbReference>
<dbReference type="RefSeq" id="XP_038408452.1">
    <property type="nucleotide sequence ID" value="XM_038552524.1"/>
</dbReference>
<dbReference type="RefSeq" id="XP_038525255.1">
    <property type="nucleotide sequence ID" value="XM_038669327.1"/>
</dbReference>
<dbReference type="RefSeq" id="XP_038536945.1">
    <property type="nucleotide sequence ID" value="XM_038681017.1"/>
</dbReference>
<dbReference type="SMR" id="P81255"/>
<dbReference type="FunCoup" id="P81255">
    <property type="interactions" value="152"/>
</dbReference>
<dbReference type="STRING" id="9615.ENSCAFP00000046622"/>
<dbReference type="PaxDb" id="9615-ENSCAFP00000046622"/>
<dbReference type="Ensembl" id="ENSCAFT00000097701.1">
    <property type="protein sequence ID" value="ENSCAFP00000067833.1"/>
    <property type="gene ID" value="ENSCAFG00000056067.1"/>
</dbReference>
<dbReference type="Ensembl" id="ENSCAFT00000097865.1">
    <property type="protein sequence ID" value="ENSCAFP00000071563.1"/>
    <property type="gene ID" value="ENSCAFG00000054523.1"/>
</dbReference>
<dbReference type="Ensembl" id="ENSCAFT00000102044.1">
    <property type="protein sequence ID" value="ENSCAFP00000070912.1"/>
    <property type="gene ID" value="ENSCAFG00000055920.1"/>
</dbReference>
<dbReference type="Ensembl" id="ENSCAFT00000107820.1">
    <property type="protein sequence ID" value="ENSCAFP00000069314.1"/>
    <property type="gene ID" value="ENSCAFG00000051832.1"/>
</dbReference>
<dbReference type="Ensembl" id="ENSCAFT00030007122.1">
    <property type="protein sequence ID" value="ENSCAFP00030006244.1"/>
    <property type="gene ID" value="ENSCAFG00030003837.1"/>
</dbReference>
<dbReference type="Ensembl" id="ENSCAFT00030007164.1">
    <property type="protein sequence ID" value="ENSCAFP00030006278.1"/>
    <property type="gene ID" value="ENSCAFG00030003866.1"/>
</dbReference>
<dbReference type="Ensembl" id="ENSCAFT00040019783.1">
    <property type="protein sequence ID" value="ENSCAFP00040017164.1"/>
    <property type="gene ID" value="ENSCAFG00040010698.1"/>
</dbReference>
<dbReference type="Ensembl" id="ENSCAFT00040019809.1">
    <property type="protein sequence ID" value="ENSCAFP00040017187.1"/>
    <property type="gene ID" value="ENSCAFG00040010712.1"/>
</dbReference>
<dbReference type="Ensembl" id="ENSCAFT00040019849.1">
    <property type="protein sequence ID" value="ENSCAFP00040017219.1"/>
    <property type="gene ID" value="ENSCAFG00040010740.1"/>
</dbReference>
<dbReference type="Ensembl" id="ENSCAFT00845028654.1">
    <property type="protein sequence ID" value="ENSCAFP00845022551.1"/>
    <property type="gene ID" value="ENSCAFG00845016109.1"/>
</dbReference>
<dbReference type="Ensembl" id="ENSCAFT00845028742.1">
    <property type="protein sequence ID" value="ENSCAFP00845022623.1"/>
    <property type="gene ID" value="ENSCAFG00845016171.1"/>
</dbReference>
<dbReference type="GeneID" id="100682977"/>
<dbReference type="GeneID" id="100683045"/>
<dbReference type="GeneID" id="100685213"/>
<dbReference type="GeneID" id="100688005"/>
<dbReference type="GeneID" id="100688084"/>
<dbReference type="GeneID" id="119873921"/>
<dbReference type="GeneID" id="119876805"/>
<dbReference type="GeneID" id="119876806"/>
<dbReference type="GeneID" id="119876807"/>
<dbReference type="GeneID" id="119876808"/>
<dbReference type="GeneID" id="119876809"/>
<dbReference type="GeneID" id="119876810"/>
<dbReference type="GeneID" id="119876811"/>
<dbReference type="KEGG" id="cfa:100685213"/>
<dbReference type="KEGG" id="cfa:100688005"/>
<dbReference type="KEGG" id="cfa:100688084"/>
<dbReference type="VEuPathDB" id="HostDB:ENSCAFG00845016109"/>
<dbReference type="VEuPathDB" id="HostDB:ENSCAFG00845016171"/>
<dbReference type="GeneTree" id="ENSGT01000000214430"/>
<dbReference type="InParanoid" id="P81255"/>
<dbReference type="OrthoDB" id="9728491at2759"/>
<dbReference type="Reactome" id="R-CFA-909733">
    <property type="pathway name" value="Interferon alpha/beta signaling"/>
</dbReference>
<dbReference type="Reactome" id="R-CFA-912694">
    <property type="pathway name" value="Regulation of IFNA/IFNB signaling"/>
</dbReference>
<dbReference type="Proteomes" id="UP000002254">
    <property type="component" value="Chromosome 11"/>
</dbReference>
<dbReference type="Proteomes" id="UP000694429">
    <property type="component" value="Chromosome 11"/>
</dbReference>
<dbReference type="Proteomes" id="UP000694542">
    <property type="component" value="Unassembled WGS sequence"/>
</dbReference>
<dbReference type="Proteomes" id="UP000805418">
    <property type="component" value="Chromosome 11"/>
</dbReference>
<dbReference type="Bgee" id="ENSCAFG00000041836">
    <property type="expression patterns" value="Expressed in hypothalamus"/>
</dbReference>
<dbReference type="GO" id="GO:0005615">
    <property type="term" value="C:extracellular space"/>
    <property type="evidence" value="ECO:0000318"/>
    <property type="project" value="GO_Central"/>
</dbReference>
<dbReference type="GO" id="GO:0005125">
    <property type="term" value="F:cytokine activity"/>
    <property type="evidence" value="ECO:0000318"/>
    <property type="project" value="GO_Central"/>
</dbReference>
<dbReference type="GO" id="GO:0005132">
    <property type="term" value="F:type I interferon receptor binding"/>
    <property type="evidence" value="ECO:0000318"/>
    <property type="project" value="GO_Central"/>
</dbReference>
<dbReference type="GO" id="GO:0002250">
    <property type="term" value="P:adaptive immune response"/>
    <property type="evidence" value="ECO:0000318"/>
    <property type="project" value="GO_Central"/>
</dbReference>
<dbReference type="GO" id="GO:0002312">
    <property type="term" value="P:B cell activation involved in immune response"/>
    <property type="evidence" value="ECO:0000318"/>
    <property type="project" value="GO_Central"/>
</dbReference>
<dbReference type="GO" id="GO:0051607">
    <property type="term" value="P:defense response to virus"/>
    <property type="evidence" value="ECO:0007669"/>
    <property type="project" value="UniProtKB-KW"/>
</dbReference>
<dbReference type="GO" id="GO:0006959">
    <property type="term" value="P:humoral immune response"/>
    <property type="evidence" value="ECO:0000318"/>
    <property type="project" value="GO_Central"/>
</dbReference>
<dbReference type="GO" id="GO:0002323">
    <property type="term" value="P:natural killer cell activation involved in immune response"/>
    <property type="evidence" value="ECO:0000318"/>
    <property type="project" value="GO_Central"/>
</dbReference>
<dbReference type="GO" id="GO:0043330">
    <property type="term" value="P:response to exogenous dsRNA"/>
    <property type="evidence" value="ECO:0000318"/>
    <property type="project" value="GO_Central"/>
</dbReference>
<dbReference type="GO" id="GO:0002286">
    <property type="term" value="P:T cell activation involved in immune response"/>
    <property type="evidence" value="ECO:0000318"/>
    <property type="project" value="GO_Central"/>
</dbReference>
<dbReference type="GO" id="GO:0060337">
    <property type="term" value="P:type I interferon-mediated signaling pathway"/>
    <property type="evidence" value="ECO:0000318"/>
    <property type="project" value="GO_Central"/>
</dbReference>
<dbReference type="CDD" id="cd00095">
    <property type="entry name" value="IFab"/>
    <property type="match status" value="1"/>
</dbReference>
<dbReference type="FunFam" id="1.20.1250.10:FF:000001">
    <property type="entry name" value="Interferon alpha"/>
    <property type="match status" value="1"/>
</dbReference>
<dbReference type="Gene3D" id="1.20.1250.10">
    <property type="match status" value="1"/>
</dbReference>
<dbReference type="InterPro" id="IPR009079">
    <property type="entry name" value="4_helix_cytokine-like_core"/>
</dbReference>
<dbReference type="InterPro" id="IPR000471">
    <property type="entry name" value="Interferon_alpha/beta/delta"/>
</dbReference>
<dbReference type="PANTHER" id="PTHR11691:SF60">
    <property type="entry name" value="INTERFERON ALPHA-5"/>
    <property type="match status" value="1"/>
</dbReference>
<dbReference type="PANTHER" id="PTHR11691">
    <property type="entry name" value="TYPE I INTERFERON"/>
    <property type="match status" value="1"/>
</dbReference>
<dbReference type="Pfam" id="PF00143">
    <property type="entry name" value="Interferon"/>
    <property type="match status" value="1"/>
</dbReference>
<dbReference type="PRINTS" id="PR00266">
    <property type="entry name" value="INTERFERONAB"/>
</dbReference>
<dbReference type="SMART" id="SM00076">
    <property type="entry name" value="IFabd"/>
    <property type="match status" value="1"/>
</dbReference>
<dbReference type="SUPFAM" id="SSF47266">
    <property type="entry name" value="4-helical cytokines"/>
    <property type="match status" value="1"/>
</dbReference>
<dbReference type="PROSITE" id="PS00252">
    <property type="entry name" value="INTERFERON_A_B_D"/>
    <property type="match status" value="1"/>
</dbReference>
<accession>P81255</accession>
<feature type="signal peptide" evidence="1">
    <location>
        <begin position="1"/>
        <end position="23"/>
    </location>
</feature>
<feature type="chain" id="PRO_0000016392" description="Interferon alpha-1/2">
    <location>
        <begin position="24"/>
        <end position="187"/>
    </location>
</feature>
<feature type="glycosylation site" description="N-linked (GlcNAc...) asparagine" evidence="2">
    <location>
        <position position="101"/>
    </location>
</feature>
<feature type="disulfide bond" evidence="1">
    <location>
        <begin position="24"/>
        <end position="122"/>
    </location>
</feature>
<feature type="disulfide bond" evidence="1">
    <location>
        <begin position="52"/>
        <end position="160"/>
    </location>
</feature>
<name>IFNA1_CANLF</name>
<keyword id="KW-0051">Antiviral defense</keyword>
<keyword id="KW-0202">Cytokine</keyword>
<keyword id="KW-1015">Disulfide bond</keyword>
<keyword id="KW-0325">Glycoprotein</keyword>
<keyword id="KW-1185">Reference proteome</keyword>
<keyword id="KW-0964">Secreted</keyword>
<keyword id="KW-0732">Signal</keyword>
<evidence type="ECO:0000250" key="1"/>
<evidence type="ECO:0000255" key="2"/>
<evidence type="ECO:0000305" key="3"/>
<organism>
    <name type="scientific">Canis lupus familiaris</name>
    <name type="common">Dog</name>
    <name type="synonym">Canis familiaris</name>
    <dbReference type="NCBI Taxonomy" id="9615"/>
    <lineage>
        <taxon>Eukaryota</taxon>
        <taxon>Metazoa</taxon>
        <taxon>Chordata</taxon>
        <taxon>Craniata</taxon>
        <taxon>Vertebrata</taxon>
        <taxon>Euteleostomi</taxon>
        <taxon>Mammalia</taxon>
        <taxon>Eutheria</taxon>
        <taxon>Laurasiatheria</taxon>
        <taxon>Carnivora</taxon>
        <taxon>Caniformia</taxon>
        <taxon>Canidae</taxon>
        <taxon>Canis</taxon>
    </lineage>
</organism>